<feature type="signal peptide" evidence="2">
    <location>
        <begin position="1"/>
        <end position="31"/>
    </location>
</feature>
<feature type="chain" id="PRO_0000012920" description="Cadherin EGF LAG seven-pass G-type receptor 3">
    <location>
        <begin position="32"/>
        <end position="3313"/>
    </location>
</feature>
<feature type="topological domain" description="Extracellular" evidence="2">
    <location>
        <begin position="32"/>
        <end position="2538"/>
    </location>
</feature>
<feature type="transmembrane region" description="Helical; Name=1" evidence="2">
    <location>
        <begin position="2539"/>
        <end position="2559"/>
    </location>
</feature>
<feature type="topological domain" description="Cytoplasmic" evidence="2">
    <location>
        <begin position="2560"/>
        <end position="2570"/>
    </location>
</feature>
<feature type="transmembrane region" description="Helical; Name=2" evidence="2">
    <location>
        <begin position="2571"/>
        <end position="2591"/>
    </location>
</feature>
<feature type="topological domain" description="Extracellular" evidence="2">
    <location>
        <begin position="2592"/>
        <end position="2599"/>
    </location>
</feature>
<feature type="transmembrane region" description="Helical; Name=3" evidence="2">
    <location>
        <begin position="2600"/>
        <end position="2620"/>
    </location>
</feature>
<feature type="topological domain" description="Cytoplasmic" evidence="2">
    <location>
        <begin position="2621"/>
        <end position="2641"/>
    </location>
</feature>
<feature type="transmembrane region" description="Helical; Name=4" evidence="2">
    <location>
        <begin position="2642"/>
        <end position="2662"/>
    </location>
</feature>
<feature type="topological domain" description="Extracellular" evidence="2">
    <location>
        <begin position="2663"/>
        <end position="2679"/>
    </location>
</feature>
<feature type="transmembrane region" description="Helical; Name=5" evidence="2">
    <location>
        <begin position="2680"/>
        <end position="2700"/>
    </location>
</feature>
<feature type="topological domain" description="Cytoplasmic" evidence="2">
    <location>
        <begin position="2701"/>
        <end position="2724"/>
    </location>
</feature>
<feature type="transmembrane region" description="Helical; Name=6" evidence="2">
    <location>
        <begin position="2725"/>
        <end position="2745"/>
    </location>
</feature>
<feature type="topological domain" description="Extracellular" evidence="2">
    <location>
        <begin position="2746"/>
        <end position="2752"/>
    </location>
</feature>
<feature type="transmembrane region" description="Helical; Name=7" evidence="2">
    <location>
        <begin position="2753"/>
        <end position="2773"/>
    </location>
</feature>
<feature type="topological domain" description="Cytoplasmic" evidence="2">
    <location>
        <begin position="2774"/>
        <end position="3313"/>
    </location>
</feature>
<feature type="domain" description="Cadherin 1" evidence="3">
    <location>
        <begin position="317"/>
        <end position="424"/>
    </location>
</feature>
<feature type="domain" description="Cadherin 2" evidence="3">
    <location>
        <begin position="425"/>
        <end position="536"/>
    </location>
</feature>
<feature type="domain" description="Cadherin 3" evidence="3">
    <location>
        <begin position="537"/>
        <end position="642"/>
    </location>
</feature>
<feature type="domain" description="Cadherin 4" evidence="3">
    <location>
        <begin position="643"/>
        <end position="747"/>
    </location>
</feature>
<feature type="domain" description="Cadherin 5" evidence="3">
    <location>
        <begin position="748"/>
        <end position="849"/>
    </location>
</feature>
<feature type="domain" description="Cadherin 6" evidence="3">
    <location>
        <begin position="850"/>
        <end position="952"/>
    </location>
</feature>
<feature type="domain" description="Cadherin 7" evidence="3">
    <location>
        <begin position="953"/>
        <end position="1058"/>
    </location>
</feature>
<feature type="domain" description="Cadherin 8" evidence="3">
    <location>
        <begin position="1059"/>
        <end position="1160"/>
    </location>
</feature>
<feature type="domain" description="Cadherin 9" evidence="3">
    <location>
        <begin position="1161"/>
        <end position="1257"/>
    </location>
</feature>
<feature type="domain" description="EGF-like 1; calcium-binding" evidence="4">
    <location>
        <begin position="1366"/>
        <end position="1424"/>
    </location>
</feature>
<feature type="domain" description="EGF-like 2; calcium-binding" evidence="4">
    <location>
        <begin position="1426"/>
        <end position="1462"/>
    </location>
</feature>
<feature type="domain" description="EGF-like 3; calcium-binding" evidence="4">
    <location>
        <begin position="1466"/>
        <end position="1505"/>
    </location>
</feature>
<feature type="domain" description="Laminin G-like 1" evidence="6">
    <location>
        <begin position="1506"/>
        <end position="1710"/>
    </location>
</feature>
<feature type="domain" description="EGF-like 4; calcium-binding" evidence="4">
    <location>
        <begin position="1713"/>
        <end position="1749"/>
    </location>
</feature>
<feature type="domain" description="Laminin G-like 2" evidence="6">
    <location>
        <begin position="1753"/>
        <end position="1935"/>
    </location>
</feature>
<feature type="domain" description="EGF-like 5; calcium-binding" evidence="4">
    <location>
        <begin position="1937"/>
        <end position="1972"/>
    </location>
</feature>
<feature type="domain" description="EGF-like 6; calcium-binding" evidence="4">
    <location>
        <begin position="1973"/>
        <end position="2011"/>
    </location>
</feature>
<feature type="domain" description="EGF-like 7; calcium-binding" evidence="4">
    <location>
        <begin position="2012"/>
        <end position="2044"/>
    </location>
</feature>
<feature type="domain" description="EGF-like 8; calcium-binding" evidence="4">
    <location>
        <begin position="2046"/>
        <end position="2081"/>
    </location>
</feature>
<feature type="domain" description="Laminin EGF-like" evidence="7">
    <location>
        <begin position="2068"/>
        <end position="2115"/>
    </location>
</feature>
<feature type="domain" description="GAIN-B" evidence="5">
    <location>
        <begin position="2364"/>
        <end position="2528"/>
    </location>
</feature>
<feature type="region of interest" description="Disordered" evidence="8">
    <location>
        <begin position="148"/>
        <end position="187"/>
    </location>
</feature>
<feature type="region of interest" description="Disordered" evidence="8">
    <location>
        <begin position="205"/>
        <end position="269"/>
    </location>
</feature>
<feature type="region of interest" description="Disordered" evidence="8">
    <location>
        <begin position="2356"/>
        <end position="2395"/>
    </location>
</feature>
<feature type="region of interest" description="GPS" evidence="5">
    <location>
        <begin position="2478"/>
        <end position="2528"/>
    </location>
</feature>
<feature type="region of interest" description="Disordered" evidence="8">
    <location>
        <begin position="2887"/>
        <end position="2927"/>
    </location>
</feature>
<feature type="region of interest" description="Disordered" evidence="8">
    <location>
        <begin position="2977"/>
        <end position="3004"/>
    </location>
</feature>
<feature type="region of interest" description="Disordered" evidence="8">
    <location>
        <begin position="3091"/>
        <end position="3242"/>
    </location>
</feature>
<feature type="region of interest" description="Disordered" evidence="8">
    <location>
        <begin position="3255"/>
        <end position="3313"/>
    </location>
</feature>
<feature type="compositionally biased region" description="Basic and acidic residues" evidence="8">
    <location>
        <begin position="258"/>
        <end position="268"/>
    </location>
</feature>
<feature type="compositionally biased region" description="Polar residues" evidence="8">
    <location>
        <begin position="2374"/>
        <end position="2387"/>
    </location>
</feature>
<feature type="compositionally biased region" description="Acidic residues" evidence="8">
    <location>
        <begin position="2889"/>
        <end position="2899"/>
    </location>
</feature>
<feature type="compositionally biased region" description="Basic residues" evidence="8">
    <location>
        <begin position="2918"/>
        <end position="2927"/>
    </location>
</feature>
<feature type="compositionally biased region" description="Basic and acidic residues" evidence="8">
    <location>
        <begin position="3102"/>
        <end position="3119"/>
    </location>
</feature>
<feature type="compositionally biased region" description="Low complexity" evidence="8">
    <location>
        <begin position="3178"/>
        <end position="3197"/>
    </location>
</feature>
<feature type="compositionally biased region" description="Low complexity" evidence="8">
    <location>
        <begin position="3255"/>
        <end position="3289"/>
    </location>
</feature>
<feature type="compositionally biased region" description="Polar residues" evidence="8">
    <location>
        <begin position="3290"/>
        <end position="3301"/>
    </location>
</feature>
<feature type="modified residue" description="(3R)-3-hydroxyaspartate" evidence="2">
    <location>
        <position position="1954"/>
    </location>
</feature>
<feature type="modified residue" description="Phosphotyrosine" evidence="10">
    <location>
        <position position="2117"/>
    </location>
</feature>
<feature type="modified residue" description="Phosphotyrosine" evidence="10">
    <location>
        <position position="3050"/>
    </location>
</feature>
<feature type="modified residue" description="Phosphoserine" evidence="10">
    <location>
        <position position="3098"/>
    </location>
</feature>
<feature type="glycosylation site" description="N-linked (GlcNAc...) asparagine" evidence="2">
    <location>
        <position position="623"/>
    </location>
</feature>
<feature type="glycosylation site" description="N-linked (GlcNAc...) asparagine" evidence="2">
    <location>
        <position position="838"/>
    </location>
</feature>
<feature type="glycosylation site" description="N-linked (GlcNAc...) asparagine" evidence="2">
    <location>
        <position position="1173"/>
    </location>
</feature>
<feature type="glycosylation site" description="N-linked (GlcNAc...) asparagine" evidence="2">
    <location>
        <position position="1213"/>
    </location>
</feature>
<feature type="glycosylation site" description="N-linked (GlcNAc...) asparagine" evidence="2">
    <location>
        <position position="1308"/>
    </location>
</feature>
<feature type="glycosylation site" description="N-linked (GlcNAc...) asparagine" evidence="2">
    <location>
        <position position="1318"/>
    </location>
</feature>
<feature type="glycosylation site" description="N-linked (GlcNAc...) asparagine" evidence="2">
    <location>
        <position position="1640"/>
    </location>
</feature>
<feature type="glycosylation site" description="N-linked (GlcNAc...) asparagine" evidence="2">
    <location>
        <position position="1704"/>
    </location>
</feature>
<feature type="glycosylation site" description="N-linked (GlcNAc...) asparagine" evidence="2">
    <location>
        <position position="1761"/>
    </location>
</feature>
<feature type="glycosylation site" description="N-linked (GlcNAc...) asparagine" evidence="2">
    <location>
        <position position="2044"/>
    </location>
</feature>
<feature type="glycosylation site" description="N-linked (GlcNAc...) asparagine" evidence="2">
    <location>
        <position position="2173"/>
    </location>
</feature>
<feature type="glycosylation site" description="N-linked (GlcNAc...) asparagine" evidence="2">
    <location>
        <position position="2192"/>
    </location>
</feature>
<feature type="glycosylation site" description="N-linked (GlcNAc...) asparagine" evidence="2">
    <location>
        <position position="2382"/>
    </location>
</feature>
<feature type="glycosylation site" description="N-linked (GlcNAc...) asparagine" evidence="2">
    <location>
        <position position="2472"/>
    </location>
</feature>
<feature type="glycosylation site" description="N-linked (GlcNAc...) asparagine" evidence="2">
    <location>
        <position position="2504"/>
    </location>
</feature>
<feature type="disulfide bond" evidence="1">
    <location>
        <begin position="1370"/>
        <end position="1381"/>
    </location>
</feature>
<feature type="disulfide bond" evidence="1">
    <location>
        <begin position="1375"/>
        <end position="1412"/>
    </location>
</feature>
<feature type="disulfide bond" evidence="1">
    <location>
        <begin position="1414"/>
        <end position="1423"/>
    </location>
</feature>
<feature type="disulfide bond" evidence="1">
    <location>
        <begin position="1430"/>
        <end position="1441"/>
    </location>
</feature>
<feature type="disulfide bond" evidence="1">
    <location>
        <begin position="1435"/>
        <end position="1450"/>
    </location>
</feature>
<feature type="disulfide bond" evidence="1">
    <location>
        <begin position="1452"/>
        <end position="1461"/>
    </location>
</feature>
<feature type="disulfide bond" evidence="1">
    <location>
        <begin position="1470"/>
        <end position="1481"/>
    </location>
</feature>
<feature type="disulfide bond" evidence="1">
    <location>
        <begin position="1475"/>
        <end position="1491"/>
    </location>
</feature>
<feature type="disulfide bond" evidence="1">
    <location>
        <begin position="1493"/>
        <end position="1504"/>
    </location>
</feature>
<feature type="disulfide bond" evidence="1">
    <location>
        <begin position="1684"/>
        <end position="1710"/>
    </location>
</feature>
<feature type="disulfide bond" evidence="1">
    <location>
        <begin position="1717"/>
        <end position="1728"/>
    </location>
</feature>
<feature type="disulfide bond" evidence="1">
    <location>
        <begin position="1722"/>
        <end position="1737"/>
    </location>
</feature>
<feature type="disulfide bond" evidence="1">
    <location>
        <begin position="1739"/>
        <end position="1748"/>
    </location>
</feature>
<feature type="disulfide bond" evidence="1">
    <location>
        <begin position="1906"/>
        <end position="1935"/>
    </location>
</feature>
<feature type="disulfide bond" evidence="1">
    <location>
        <begin position="1941"/>
        <end position="1952"/>
    </location>
</feature>
<feature type="disulfide bond" evidence="1">
    <location>
        <begin position="1946"/>
        <end position="1961"/>
    </location>
</feature>
<feature type="disulfide bond" evidence="1">
    <location>
        <begin position="1963"/>
        <end position="1972"/>
    </location>
</feature>
<feature type="disulfide bond" evidence="1">
    <location>
        <begin position="1976"/>
        <end position="1987"/>
    </location>
</feature>
<feature type="disulfide bond" evidence="1">
    <location>
        <begin position="1981"/>
        <end position="1999"/>
    </location>
</feature>
<feature type="disulfide bond" evidence="1">
    <location>
        <begin position="2001"/>
        <end position="2010"/>
    </location>
</feature>
<feature type="disulfide bond" evidence="1">
    <location>
        <begin position="2018"/>
        <end position="2031"/>
    </location>
</feature>
<feature type="disulfide bond" evidence="1">
    <location>
        <begin position="2033"/>
        <end position="2043"/>
    </location>
</feature>
<feature type="disulfide bond" evidence="1">
    <location>
        <begin position="2050"/>
        <end position="2065"/>
    </location>
</feature>
<feature type="disulfide bond" evidence="1">
    <location>
        <begin position="2052"/>
        <end position="2068"/>
    </location>
</feature>
<feature type="disulfide bond" evidence="1">
    <location>
        <begin position="2070"/>
        <end position="2080"/>
    </location>
</feature>
<feature type="disulfide bond" evidence="1">
    <location>
        <begin position="2089"/>
        <end position="2098"/>
    </location>
</feature>
<feature type="disulfide bond" evidence="1">
    <location>
        <begin position="2101"/>
        <end position="2113"/>
    </location>
</feature>
<feature type="disulfide bond" evidence="5">
    <location>
        <begin position="2478"/>
        <end position="2510"/>
    </location>
</feature>
<feature type="disulfide bond" evidence="5">
    <location>
        <begin position="2498"/>
        <end position="2512"/>
    </location>
</feature>
<dbReference type="EMBL" id="AB011528">
    <property type="protein sequence ID" value="BAA32459.1"/>
    <property type="molecule type" value="mRNA"/>
</dbReference>
<dbReference type="RefSeq" id="NP_112610.1">
    <property type="nucleotide sequence ID" value="NM_031320.1"/>
</dbReference>
<dbReference type="SMR" id="O88278"/>
<dbReference type="FunCoup" id="O88278">
    <property type="interactions" value="987"/>
</dbReference>
<dbReference type="STRING" id="10116.ENSRNOP00000068821"/>
<dbReference type="GlyCosmos" id="O88278">
    <property type="glycosylation" value="15 sites, No reported glycans"/>
</dbReference>
<dbReference type="GlyGen" id="O88278">
    <property type="glycosylation" value="19 sites"/>
</dbReference>
<dbReference type="iPTMnet" id="O88278"/>
<dbReference type="PhosphoSitePlus" id="O88278"/>
<dbReference type="PaxDb" id="10116-ENSRNOP00000041011"/>
<dbReference type="Ensembl" id="ENSRNOT00000112823.1">
    <property type="protein sequence ID" value="ENSRNOP00000079747.1"/>
    <property type="gene ID" value="ENSRNOG00000053889.2"/>
</dbReference>
<dbReference type="GeneID" id="83466"/>
<dbReference type="KEGG" id="rno:83466"/>
<dbReference type="UCSC" id="RGD:621787">
    <property type="organism name" value="rat"/>
</dbReference>
<dbReference type="AGR" id="RGD:621787"/>
<dbReference type="CTD" id="1951"/>
<dbReference type="RGD" id="621787">
    <property type="gene designation" value="Celsr3"/>
</dbReference>
<dbReference type="eggNOG" id="KOG4289">
    <property type="taxonomic scope" value="Eukaryota"/>
</dbReference>
<dbReference type="GeneTree" id="ENSGT00940000160077"/>
<dbReference type="HOGENOM" id="CLU_000158_1_0_1"/>
<dbReference type="InParanoid" id="O88278"/>
<dbReference type="OMA" id="TEVYTVI"/>
<dbReference type="OrthoDB" id="54890at9989"/>
<dbReference type="PhylomeDB" id="O88278"/>
<dbReference type="PRO" id="PR:O88278"/>
<dbReference type="Proteomes" id="UP000002494">
    <property type="component" value="Chromosome 8"/>
</dbReference>
<dbReference type="Bgee" id="ENSRNOG00000053889">
    <property type="expression patterns" value="Expressed in cerebellum and 7 other cell types or tissues"/>
</dbReference>
<dbReference type="GO" id="GO:0098978">
    <property type="term" value="C:glutamatergic synapse"/>
    <property type="evidence" value="ECO:0000266"/>
    <property type="project" value="RGD"/>
</dbReference>
<dbReference type="GO" id="GO:0098839">
    <property type="term" value="C:postsynaptic density membrane"/>
    <property type="evidence" value="ECO:0000266"/>
    <property type="project" value="RGD"/>
</dbReference>
<dbReference type="GO" id="GO:0048787">
    <property type="term" value="C:presynaptic active zone membrane"/>
    <property type="evidence" value="ECO:0000266"/>
    <property type="project" value="RGD"/>
</dbReference>
<dbReference type="GO" id="GO:0005509">
    <property type="term" value="F:calcium ion binding"/>
    <property type="evidence" value="ECO:0007669"/>
    <property type="project" value="InterPro"/>
</dbReference>
<dbReference type="GO" id="GO:0004930">
    <property type="term" value="F:G protein-coupled receptor activity"/>
    <property type="evidence" value="ECO:0007669"/>
    <property type="project" value="UniProtKB-KW"/>
</dbReference>
<dbReference type="GO" id="GO:0007413">
    <property type="term" value="P:axonal fasciculation"/>
    <property type="evidence" value="ECO:0000266"/>
    <property type="project" value="RGD"/>
</dbReference>
<dbReference type="GO" id="GO:0098609">
    <property type="term" value="P:cell-cell adhesion"/>
    <property type="evidence" value="ECO:0000318"/>
    <property type="project" value="GO_Central"/>
</dbReference>
<dbReference type="GO" id="GO:0060271">
    <property type="term" value="P:cilium assembly"/>
    <property type="evidence" value="ECO:0000266"/>
    <property type="project" value="RGD"/>
</dbReference>
<dbReference type="GO" id="GO:0036514">
    <property type="term" value="P:dopaminergic neuron axon guidance"/>
    <property type="evidence" value="ECO:0000266"/>
    <property type="project" value="RGD"/>
</dbReference>
<dbReference type="GO" id="GO:0007156">
    <property type="term" value="P:homophilic cell adhesion via plasma membrane adhesion molecules"/>
    <property type="evidence" value="ECO:0007669"/>
    <property type="project" value="InterPro"/>
</dbReference>
<dbReference type="GO" id="GO:0097475">
    <property type="term" value="P:motor neuron migration"/>
    <property type="evidence" value="ECO:0000266"/>
    <property type="project" value="RGD"/>
</dbReference>
<dbReference type="GO" id="GO:0032880">
    <property type="term" value="P:regulation of protein localization"/>
    <property type="evidence" value="ECO:0000266"/>
    <property type="project" value="RGD"/>
</dbReference>
<dbReference type="GO" id="GO:0036515">
    <property type="term" value="P:serotonergic neuron axon guidance"/>
    <property type="evidence" value="ECO:0000266"/>
    <property type="project" value="RGD"/>
</dbReference>
<dbReference type="GO" id="GO:0060071">
    <property type="term" value="P:Wnt signaling pathway, planar cell polarity pathway"/>
    <property type="evidence" value="ECO:0000266"/>
    <property type="project" value="RGD"/>
</dbReference>
<dbReference type="CDD" id="cd11304">
    <property type="entry name" value="Cadherin_repeat"/>
    <property type="match status" value="9"/>
</dbReference>
<dbReference type="CDD" id="cd00054">
    <property type="entry name" value="EGF_CA"/>
    <property type="match status" value="5"/>
</dbReference>
<dbReference type="CDD" id="cd00055">
    <property type="entry name" value="EGF_Lam"/>
    <property type="match status" value="2"/>
</dbReference>
<dbReference type="CDD" id="cd00110">
    <property type="entry name" value="LamG"/>
    <property type="match status" value="2"/>
</dbReference>
<dbReference type="FunFam" id="2.10.25.10:FF:000011">
    <property type="entry name" value="Cadherin EGF LAG seven-pass G-type receptor"/>
    <property type="match status" value="1"/>
</dbReference>
<dbReference type="FunFam" id="2.60.40.60:FF:000013">
    <property type="entry name" value="Cadherin EGF LAG seven-pass G-type receptor"/>
    <property type="match status" value="1"/>
</dbReference>
<dbReference type="FunFam" id="4.10.1240.10:FF:000021">
    <property type="entry name" value="Cadherin EGF LAG seven-pass G-type receptor"/>
    <property type="match status" value="1"/>
</dbReference>
<dbReference type="FunFam" id="1.20.1070.10:FF:000108">
    <property type="entry name" value="Cadherin EGF LAG seven-pass G-type receptor 3"/>
    <property type="match status" value="1"/>
</dbReference>
<dbReference type="FunFam" id="2.10.25.10:FF:000089">
    <property type="entry name" value="Cadherin EGF LAG seven-pass G-type receptor 3"/>
    <property type="match status" value="1"/>
</dbReference>
<dbReference type="FunFam" id="2.10.25.10:FF:000286">
    <property type="entry name" value="Cadherin EGF LAG seven-pass G-type receptor 3"/>
    <property type="match status" value="1"/>
</dbReference>
<dbReference type="FunFam" id="2.10.25.10:FF:000311">
    <property type="entry name" value="Cadherin EGF LAG seven-pass G-type receptor 3"/>
    <property type="match status" value="1"/>
</dbReference>
<dbReference type="FunFam" id="2.60.120.200:FF:000074">
    <property type="entry name" value="Cadherin EGF LAG seven-pass G-type receptor 3"/>
    <property type="match status" value="1"/>
</dbReference>
<dbReference type="FunFam" id="2.60.120.200:FF:000084">
    <property type="entry name" value="Cadherin EGF LAG seven-pass G-type receptor 3"/>
    <property type="match status" value="1"/>
</dbReference>
<dbReference type="FunFam" id="2.60.40.60:FF:000010">
    <property type="entry name" value="Cadherin EGF LAG seven-pass G-type receptor 3"/>
    <property type="match status" value="2"/>
</dbReference>
<dbReference type="FunFam" id="2.60.40.60:FF:000023">
    <property type="entry name" value="Cadherin EGF LAG seven-pass G-type receptor 3"/>
    <property type="match status" value="2"/>
</dbReference>
<dbReference type="FunFam" id="2.60.40.60:FF:000029">
    <property type="entry name" value="Cadherin EGF LAG seven-pass G-type receptor 3"/>
    <property type="match status" value="1"/>
</dbReference>
<dbReference type="FunFam" id="2.60.40.60:FF:000038">
    <property type="entry name" value="Cadherin EGF LAG seven-pass G-type receptor 3"/>
    <property type="match status" value="1"/>
</dbReference>
<dbReference type="FunFam" id="2.60.40.60:FF:000040">
    <property type="entry name" value="cadherin EGF LAG seven-pass G-type receptor 3"/>
    <property type="match status" value="1"/>
</dbReference>
<dbReference type="FunFam" id="2.10.25.10:FF:000113">
    <property type="entry name" value="Cadherin, EGF LAG seven-pass G-type receptor 3"/>
    <property type="match status" value="1"/>
</dbReference>
<dbReference type="FunFam" id="2.60.40.60:FF:000044">
    <property type="entry name" value="Cadherin, EGF LAG seven-pass G-type receptor 3"/>
    <property type="match status" value="1"/>
</dbReference>
<dbReference type="Gene3D" id="2.60.120.200">
    <property type="match status" value="2"/>
</dbReference>
<dbReference type="Gene3D" id="2.60.220.50">
    <property type="match status" value="1"/>
</dbReference>
<dbReference type="Gene3D" id="2.60.40.60">
    <property type="entry name" value="Cadherins"/>
    <property type="match status" value="9"/>
</dbReference>
<dbReference type="Gene3D" id="4.10.1240.10">
    <property type="entry name" value="GPCR, family 2, extracellular hormone receptor domain"/>
    <property type="match status" value="1"/>
</dbReference>
<dbReference type="Gene3D" id="2.10.25.10">
    <property type="entry name" value="Laminin"/>
    <property type="match status" value="7"/>
</dbReference>
<dbReference type="Gene3D" id="1.20.1070.10">
    <property type="entry name" value="Rhodopsin 7-helix transmembrane proteins"/>
    <property type="match status" value="1"/>
</dbReference>
<dbReference type="InterPro" id="IPR002126">
    <property type="entry name" value="Cadherin-like_dom"/>
</dbReference>
<dbReference type="InterPro" id="IPR015919">
    <property type="entry name" value="Cadherin-like_sf"/>
</dbReference>
<dbReference type="InterPro" id="IPR056286">
    <property type="entry name" value="Cadherin_CELSR1-3_9th"/>
</dbReference>
<dbReference type="InterPro" id="IPR020894">
    <property type="entry name" value="Cadherin_CS"/>
</dbReference>
<dbReference type="InterPro" id="IPR013320">
    <property type="entry name" value="ConA-like_dom_sf"/>
</dbReference>
<dbReference type="InterPro" id="IPR001881">
    <property type="entry name" value="EGF-like_Ca-bd_dom"/>
</dbReference>
<dbReference type="InterPro" id="IPR000742">
    <property type="entry name" value="EGF-like_dom"/>
</dbReference>
<dbReference type="InterPro" id="IPR057244">
    <property type="entry name" value="GAIN_B"/>
</dbReference>
<dbReference type="InterPro" id="IPR032471">
    <property type="entry name" value="GAIN_dom_N"/>
</dbReference>
<dbReference type="InterPro" id="IPR046338">
    <property type="entry name" value="GAIN_dom_sf"/>
</dbReference>
<dbReference type="InterPro" id="IPR017981">
    <property type="entry name" value="GPCR_2-like_7TM"/>
</dbReference>
<dbReference type="InterPro" id="IPR036445">
    <property type="entry name" value="GPCR_2_extracell_dom_sf"/>
</dbReference>
<dbReference type="InterPro" id="IPR001879">
    <property type="entry name" value="GPCR_2_extracellular_dom"/>
</dbReference>
<dbReference type="InterPro" id="IPR000832">
    <property type="entry name" value="GPCR_2_secretin-like"/>
</dbReference>
<dbReference type="InterPro" id="IPR017983">
    <property type="entry name" value="GPCR_2_secretin-like_CS"/>
</dbReference>
<dbReference type="InterPro" id="IPR000203">
    <property type="entry name" value="GPS"/>
</dbReference>
<dbReference type="InterPro" id="IPR001791">
    <property type="entry name" value="Laminin_G"/>
</dbReference>
<dbReference type="InterPro" id="IPR002049">
    <property type="entry name" value="LE_dom"/>
</dbReference>
<dbReference type="PANTHER" id="PTHR24026:SF38">
    <property type="entry name" value="CADHERIN EGF LAG SEVEN-PASS G-TYPE RECEPTOR 3"/>
    <property type="match status" value="1"/>
</dbReference>
<dbReference type="PANTHER" id="PTHR24026">
    <property type="entry name" value="FAT ATYPICAL CADHERIN-RELATED"/>
    <property type="match status" value="1"/>
</dbReference>
<dbReference type="Pfam" id="PF00002">
    <property type="entry name" value="7tm_2"/>
    <property type="match status" value="1"/>
</dbReference>
<dbReference type="Pfam" id="PF00028">
    <property type="entry name" value="Cadherin"/>
    <property type="match status" value="8"/>
</dbReference>
<dbReference type="Pfam" id="PF23592">
    <property type="entry name" value="Cadherin_CELSR2_9th"/>
    <property type="match status" value="1"/>
</dbReference>
<dbReference type="Pfam" id="PF00008">
    <property type="entry name" value="EGF"/>
    <property type="match status" value="4"/>
</dbReference>
<dbReference type="Pfam" id="PF00053">
    <property type="entry name" value="EGF_laminin"/>
    <property type="match status" value="1"/>
</dbReference>
<dbReference type="Pfam" id="PF16489">
    <property type="entry name" value="GAIN"/>
    <property type="match status" value="1"/>
</dbReference>
<dbReference type="Pfam" id="PF01825">
    <property type="entry name" value="GPS"/>
    <property type="match status" value="1"/>
</dbReference>
<dbReference type="Pfam" id="PF02793">
    <property type="entry name" value="HRM"/>
    <property type="match status" value="1"/>
</dbReference>
<dbReference type="Pfam" id="PF02210">
    <property type="entry name" value="Laminin_G_2"/>
    <property type="match status" value="2"/>
</dbReference>
<dbReference type="PRINTS" id="PR00205">
    <property type="entry name" value="CADHERIN"/>
</dbReference>
<dbReference type="PRINTS" id="PR00249">
    <property type="entry name" value="GPCRSECRETIN"/>
</dbReference>
<dbReference type="SMART" id="SM00112">
    <property type="entry name" value="CA"/>
    <property type="match status" value="9"/>
</dbReference>
<dbReference type="SMART" id="SM00181">
    <property type="entry name" value="EGF"/>
    <property type="match status" value="6"/>
</dbReference>
<dbReference type="SMART" id="SM00179">
    <property type="entry name" value="EGF_CA"/>
    <property type="match status" value="5"/>
</dbReference>
<dbReference type="SMART" id="SM00180">
    <property type="entry name" value="EGF_Lam"/>
    <property type="match status" value="1"/>
</dbReference>
<dbReference type="SMART" id="SM00303">
    <property type="entry name" value="GPS"/>
    <property type="match status" value="1"/>
</dbReference>
<dbReference type="SMART" id="SM00008">
    <property type="entry name" value="HormR"/>
    <property type="match status" value="1"/>
</dbReference>
<dbReference type="SMART" id="SM00282">
    <property type="entry name" value="LamG"/>
    <property type="match status" value="2"/>
</dbReference>
<dbReference type="SUPFAM" id="SSF49313">
    <property type="entry name" value="Cadherin-like"/>
    <property type="match status" value="9"/>
</dbReference>
<dbReference type="SUPFAM" id="SSF49899">
    <property type="entry name" value="Concanavalin A-like lectins/glucanases"/>
    <property type="match status" value="2"/>
</dbReference>
<dbReference type="SUPFAM" id="SSF57196">
    <property type="entry name" value="EGF/Laminin"/>
    <property type="match status" value="4"/>
</dbReference>
<dbReference type="SUPFAM" id="SSF111418">
    <property type="entry name" value="Hormone receptor domain"/>
    <property type="match status" value="1"/>
</dbReference>
<dbReference type="PROSITE" id="PS00010">
    <property type="entry name" value="ASX_HYDROXYL"/>
    <property type="match status" value="1"/>
</dbReference>
<dbReference type="PROSITE" id="PS00232">
    <property type="entry name" value="CADHERIN_1"/>
    <property type="match status" value="7"/>
</dbReference>
<dbReference type="PROSITE" id="PS50268">
    <property type="entry name" value="CADHERIN_2"/>
    <property type="match status" value="8"/>
</dbReference>
<dbReference type="PROSITE" id="PS00022">
    <property type="entry name" value="EGF_1"/>
    <property type="match status" value="6"/>
</dbReference>
<dbReference type="PROSITE" id="PS01186">
    <property type="entry name" value="EGF_2"/>
    <property type="match status" value="4"/>
</dbReference>
<dbReference type="PROSITE" id="PS50026">
    <property type="entry name" value="EGF_3"/>
    <property type="match status" value="6"/>
</dbReference>
<dbReference type="PROSITE" id="PS01248">
    <property type="entry name" value="EGF_LAM_1"/>
    <property type="match status" value="1"/>
</dbReference>
<dbReference type="PROSITE" id="PS50027">
    <property type="entry name" value="EGF_LAM_2"/>
    <property type="match status" value="1"/>
</dbReference>
<dbReference type="PROSITE" id="PS00650">
    <property type="entry name" value="G_PROTEIN_RECEP_F2_2"/>
    <property type="match status" value="1"/>
</dbReference>
<dbReference type="PROSITE" id="PS50227">
    <property type="entry name" value="G_PROTEIN_RECEP_F2_3"/>
    <property type="match status" value="1"/>
</dbReference>
<dbReference type="PROSITE" id="PS50261">
    <property type="entry name" value="G_PROTEIN_RECEP_F2_4"/>
    <property type="match status" value="1"/>
</dbReference>
<dbReference type="PROSITE" id="PS50221">
    <property type="entry name" value="GAIN_B"/>
    <property type="match status" value="1"/>
</dbReference>
<dbReference type="PROSITE" id="PS50025">
    <property type="entry name" value="LAM_G_DOMAIN"/>
    <property type="match status" value="2"/>
</dbReference>
<proteinExistence type="evidence at protein level"/>
<comment type="function">
    <text>Receptor that may have an important role in cell/cell signaling during nervous system formation.</text>
</comment>
<comment type="subcellular location">
    <subcellularLocation>
        <location>Cell membrane</location>
        <topology>Multi-pass membrane protein</topology>
    </subcellularLocation>
</comment>
<comment type="tissue specificity">
    <text>Expressed in the brain. Expressed in cerebellum, olfactory bulb, cerebral cortex, hippocampus and brain stem.</text>
</comment>
<comment type="PTM">
    <text evidence="1">The iron and 2-oxoglutarate dependent 3-hydroxylation of aspartate and asparagine is (R) stereospecific within EGF domains.</text>
</comment>
<comment type="similarity">
    <text evidence="9">Belongs to the G-protein coupled receptor 2 family. LN-TM7 subfamily.</text>
</comment>
<accession>O88278</accession>
<evidence type="ECO:0000250" key="1"/>
<evidence type="ECO:0000255" key="2"/>
<evidence type="ECO:0000255" key="3">
    <source>
        <dbReference type="PROSITE-ProRule" id="PRU00043"/>
    </source>
</evidence>
<evidence type="ECO:0000255" key="4">
    <source>
        <dbReference type="PROSITE-ProRule" id="PRU00076"/>
    </source>
</evidence>
<evidence type="ECO:0000255" key="5">
    <source>
        <dbReference type="PROSITE-ProRule" id="PRU00098"/>
    </source>
</evidence>
<evidence type="ECO:0000255" key="6">
    <source>
        <dbReference type="PROSITE-ProRule" id="PRU00122"/>
    </source>
</evidence>
<evidence type="ECO:0000255" key="7">
    <source>
        <dbReference type="PROSITE-ProRule" id="PRU00460"/>
    </source>
</evidence>
<evidence type="ECO:0000256" key="8">
    <source>
        <dbReference type="SAM" id="MobiDB-lite"/>
    </source>
</evidence>
<evidence type="ECO:0000305" key="9"/>
<evidence type="ECO:0007744" key="10">
    <source>
    </source>
</evidence>
<reference key="1">
    <citation type="journal article" date="1998" name="Genomics">
        <title>Identification of high-molecular-weight proteins with multiple EGF-like motifs by motif-trap screening.</title>
        <authorList>
            <person name="Nakayama M."/>
            <person name="Nakajima D."/>
            <person name="Nagase T."/>
            <person name="Nomura N."/>
            <person name="Seki N."/>
            <person name="Ohara O."/>
        </authorList>
    </citation>
    <scope>NUCLEOTIDE SEQUENCE [MRNA]</scope>
    <source>
        <strain>Sprague-Dawley</strain>
        <tissue>Brain</tissue>
    </source>
</reference>
<reference key="2">
    <citation type="journal article" date="2006" name="Proc. Natl. Acad. Sci. U.S.A.">
        <title>Quantitative phosphoproteomics of vasopressin-sensitive renal cells: regulation of aquaporin-2 phosphorylation at two sites.</title>
        <authorList>
            <person name="Hoffert J.D."/>
            <person name="Pisitkun T."/>
            <person name="Wang G."/>
            <person name="Shen R.-F."/>
            <person name="Knepper M.A."/>
        </authorList>
    </citation>
    <scope>PHOSPHORYLATION [LARGE SCALE ANALYSIS] AT TYR-2117; TYR-3050 AND SER-3098</scope>
    <scope>IDENTIFICATION BY MASS SPECTROMETRY [LARGE SCALE ANALYSIS]</scope>
</reference>
<sequence length="3313" mass="359355">MARRPLWWGLPGPSTPLLLLLLFSLFPSSREEMGGGGDQGWDPGVATATGPRAQIGSGAVALCPESPGVWEDGDPGLGVREPVFMKLRVGRQNARNGRGAPEQPNREPVVQALGSREQEAGQGSGYLLCWHPEISSCGRTGHLRRGSLPLDALSPGDSDLRNSSPHPSELLAQPDSPRPVAFQRNGRRSIRKRVETFRCCGKLWEPGHKGQGERSATSTVDRGPLRRDCLPGSLGSGLGEDSAPRAVRTAPAPGSAPHESRTAPERMRSRGLFRRGFLFERPGPRPPGFPTGAEAKRILSTNQARSRRAANRHPQFPQYNYQTLVPENEAAGTAVLRVVAQDPDPGEAGRLVYSLAALMNSRSLELFSIDPQSGLIRTAAALDRESMERHYLRVTAQDHGSPRLSATTMVAVTVADRNDHAPVFEQAQYRETLRENVEEGYPILQLRATDGDAPPNANLRYRFVGSPAARTAAAAAFEIDPRSGLISTSGRVDREHMESYELVVEASDQGQEPGPRSATVRVHITVLDENDNAPQFSEKRYVAQVREDVRPHTVVLRVTATDKDKDANGLVHYNIISGNSRGHFAIDSLTGEIQVMAPLDFEAEREYALRIRAQDAGRPPLSNNTGLASIQVVDINDHSPIFVSTPFQVSVLENAPLGHSVIHIQAVDADHGENSRLEYSLTGVASDTPFVINSATGWVSVSGPLDRESVEHYFFGVEARDHGSPPLSASASVTVTVLDVNDNRPEFTMKEYHLRLNEDAAVGTSVVSVTAVDRDANSAISYQITGGNTRNRFAISTQGGMGLVTLALPLDYKQERYFKLVLTASDRALHDHCYVHINITDANTHRPVFQSAHYSVSMNEDRPVGSTVVVISASDDDVGENARITYLLEDNLPQFRIDADSGAITLQAPLDYEDQVTYTLAITARDNGIPQKADTTYVEVMVNDVNDNAPQFVASHYTGLVSEDAPPFTSVLQISATDRDAHANGRVQYTFQNGEDGDGDFTIEPTSGIVRTVRRLDREAVPVYELTAYAVDRGVPPLRTPVSIQVTVQDVNDNAPVFPAEEFEVRVKENSIVGSVVAQITAVDPDDGPNAHIMYQIVEGNIPELFQMDIFSGELTALIDLDYEARQEYVIVVQATSAPLVSRATVHVRLVDQNDNSPVLNNFQILFNNYVSNRSDTFPSGIIGRIPAYDPDVSDHLFYSFERGNELQLLVVNQTSGELRLSRKLDNNRPLVASMLVTVTDGLHSVTAQCVLRVVIITEELLANSLTVRLENMWQERFLSPLLGHFLEGVAAVLATPTEDVFIFNIQNDTDVGGTVLNVSFSALAPRGAGAGAAGPWFSSEELQEQLYVRRAALAARSLLDVLPFDDNVCLREPCENYMKCVSVLRFDSSAPFLASASTLFRPIQPIAGLRCRCPPGFTGDFCETELDLCYSNPCRNGGACARREGGYTCVCRPRFTGEDCELDTEAGRCVPGVCRNGGTCTNAPNGGFRCQCPAGGAFEGPRCEVAARSFPPSSFVMFRGLRQRFHLTLSLSFATVQPSGLLFYNGRLNEKHDFLALELVAGQVRLTYSTGESSTVVSPTVPGGLSDGQWHTVHLRYYNKPRTDALGGAQGPSKDKVAVLSVDDCNVAVALRFGAEIGNYSCAAAGVQTSSKKSLDLTGPLLLGGVPNLPENFPVSRKDFIGCMRDLHIDGRRVDMAAFVANNGTTAGCQAKSHFCASGPCKNGGLCSERWGGFSCDCPVGFGGKDCRLTMAHPYHFQGNGTLSWDFGNDMPVSVPWYLGLSFRTRATKGVLMQVQLGPHSVLLCKLDQGLLSVTLSRASGHAVHLLLDQMTVSDGRWHDLRLELQEEPGGRRGHHIFMVSLDFTLFQDTMAMGSELEGLKVKHLHVGGPPPSSKEEGPQGLVGCIQGVWTGFTPFGSSALPPPSHRINVEPGCTVTNPCASGPCPPHANCKDLWQTFSCTCWPGYYGPGCVDACLLNPCQNQGSCRHLQGGPHGYTCDCASGYFGQHCEHRMDQQCPRGWWGSPTCGPCNCDVHKGFDPNCNKTSGQCHCKEFHYRPRGSDSCLPCDCYPVGSTSRSCAPHSGQCPCRPGALGRQCNSCDSPFAEVTASGCRVLYDACPKSLRSGVWWPQTKFGVLATVPCPRGALGLRGTGAAVRLCDEDHGWLEPDFFNCTSPAFRELSLLLDGLELNKTALDTVEAKKLAQRLREVTGQTDHYFSQDVRVTARLLAYLLAFESHQQGFGLTATQDAHFNENLLWAGSALLAPETGDLWAALGQRAPGGSPGSAGLVRHLEEYAATLARNMDLTYLNPVGLVTPNIMLSIDRMEQPSSSQGAHRYPRYHSNLFRGQDAWDPHTHVLLPSQSPQPSPSEVLPTSSNAENATASGVVSPPAPLEPESEPGISIVILLVYRALGGLLPAQFQAERRGARLPQNPVMNSPVVSVAVFRGRNFLRGALVSPINLEFRLLQTANRSKAICVQWDPPGPADQHGMWTARDCELVHRNGSHARCRCSRTGTFGVLMDASPRERLEGDLELLAVFTHVVVAASVTALVLTAAVLLSLRSLKSNVRGIHANVAAALGVAELLFLLGIHRTHNQLLCTVVAILLHYFFLSTFAWLLVQGLHLYRMQVEPRNVDRGAMRFYHALGWGVPAVLLGLAVGLDPEGYGNPDFCWISIHEPLIWSFAGPIVLVIVMNGIMFLLAARTSCSTGQREAKKTSVLRTLRSSFLLLLLVSASWLFGLLAVNHSVLAFHYLHAGLCGLQGLAVLLLFCVLNADARAAWTPACLGKKAAPEETRPAPGPGSGAYNNTALFEESGLIRITLGASTVSSVSSARSGRAQDQDSQRGRSYLRDNVLVRHGSTAEHAEHSLQAHAGPTDLDVAMFHRDAGADSDSDSDLSLEEERSLSIPSSESEDNGRTRGRFQRPLRRAAQSERLLAHPKDVDGNDLLSYWPALGECEAAPCALQAWGSERRLGLDSNKDAANNNQPELALTSGDETSLGRAQRQRKGILKNRLQYPLVPQTRGTPELSWCRAATLGHRAVPAASYGRIYAGGGTGSLSQPASRYSSREQLDLLLRRQLSRERLEEVPVPAPVLHPLSRPGSQERLDTAPARLEPRDRGSTLPRRQPPRDYPGTMAGRFGSRDALDLGAPREWLSTLPPPRRNRDLDPQHPPLPLSPQRPLSRDPLLPSRPLDSLSRISNSRERLDQVPSRHPSREALGPAPQLLRAREDPASGPSHGPSTEQLDILSSILASFNSSALSSVQSSSTPSGPHTTATPSATASALGPSTPRSATSHSISELSPDSEVPRSEGHS</sequence>
<organism>
    <name type="scientific">Rattus norvegicus</name>
    <name type="common">Rat</name>
    <dbReference type="NCBI Taxonomy" id="10116"/>
    <lineage>
        <taxon>Eukaryota</taxon>
        <taxon>Metazoa</taxon>
        <taxon>Chordata</taxon>
        <taxon>Craniata</taxon>
        <taxon>Vertebrata</taxon>
        <taxon>Euteleostomi</taxon>
        <taxon>Mammalia</taxon>
        <taxon>Eutheria</taxon>
        <taxon>Euarchontoglires</taxon>
        <taxon>Glires</taxon>
        <taxon>Rodentia</taxon>
        <taxon>Myomorpha</taxon>
        <taxon>Muroidea</taxon>
        <taxon>Muridae</taxon>
        <taxon>Murinae</taxon>
        <taxon>Rattus</taxon>
    </lineage>
</organism>
<gene>
    <name type="primary">Celsr3</name>
    <name type="synonym">Megf2</name>
</gene>
<protein>
    <recommendedName>
        <fullName>Cadherin EGF LAG seven-pass G-type receptor 3</fullName>
    </recommendedName>
    <alternativeName>
        <fullName>Multiple epidermal growth factor-like domains protein 2</fullName>
        <shortName>Multiple EGF-like domains protein 2</shortName>
    </alternativeName>
</protein>
<keyword id="KW-0106">Calcium</keyword>
<keyword id="KW-1003">Cell membrane</keyword>
<keyword id="KW-0217">Developmental protein</keyword>
<keyword id="KW-1015">Disulfide bond</keyword>
<keyword id="KW-0245">EGF-like domain</keyword>
<keyword id="KW-0297">G-protein coupled receptor</keyword>
<keyword id="KW-0325">Glycoprotein</keyword>
<keyword id="KW-0379">Hydroxylation</keyword>
<keyword id="KW-0424">Laminin EGF-like domain</keyword>
<keyword id="KW-0472">Membrane</keyword>
<keyword id="KW-0597">Phosphoprotein</keyword>
<keyword id="KW-0675">Receptor</keyword>
<keyword id="KW-1185">Reference proteome</keyword>
<keyword id="KW-0677">Repeat</keyword>
<keyword id="KW-0732">Signal</keyword>
<keyword id="KW-0807">Transducer</keyword>
<keyword id="KW-0812">Transmembrane</keyword>
<keyword id="KW-1133">Transmembrane helix</keyword>
<name>CELR3_RAT</name>